<protein>
    <recommendedName>
        <fullName>Carbohydrate-binding domain-containing protein C2E1P3.05c</fullName>
    </recommendedName>
</protein>
<evidence type="ECO:0000250" key="1"/>
<evidence type="ECO:0000255" key="2"/>
<evidence type="ECO:0000255" key="3">
    <source>
        <dbReference type="PROSITE-ProRule" id="PRU00597"/>
    </source>
</evidence>
<evidence type="ECO:0000256" key="4">
    <source>
        <dbReference type="SAM" id="MobiDB-lite"/>
    </source>
</evidence>
<evidence type="ECO:0000305" key="5"/>
<proteinExistence type="inferred from homology"/>
<accession>Q9P7F1</accession>
<comment type="subcellular location">
    <subcellularLocation>
        <location evidence="5">Secreted</location>
    </subcellularLocation>
</comment>
<sequence length="197" mass="20138">MLTQSLFLTVLTLALSLVSKTSASQCSPRYGTCGGIYYDGPTCCVVGSSCIYSNPWYSQCIPVDYTGPCAKLYQQCGGINYNGPTCCEPGSECIYNGPYYSQCIPVDIDPSSSSSSAASSTTSTTSSSSLVSSTTLTSSSPSAVSSTTSIPSISSTISSSVSTSSFTSLSSSGFSTVLSSTNTTSALPSSGWNVTGY</sequence>
<name>YKK5_SCHPO</name>
<reference key="1">
    <citation type="journal article" date="2002" name="Nature">
        <title>The genome sequence of Schizosaccharomyces pombe.</title>
        <authorList>
            <person name="Wood V."/>
            <person name="Gwilliam R."/>
            <person name="Rajandream M.A."/>
            <person name="Lyne M.H."/>
            <person name="Lyne R."/>
            <person name="Stewart A."/>
            <person name="Sgouros J.G."/>
            <person name="Peat N."/>
            <person name="Hayles J."/>
            <person name="Baker S.G."/>
            <person name="Basham D."/>
            <person name="Bowman S."/>
            <person name="Brooks K."/>
            <person name="Brown D."/>
            <person name="Brown S."/>
            <person name="Chillingworth T."/>
            <person name="Churcher C.M."/>
            <person name="Collins M."/>
            <person name="Connor R."/>
            <person name="Cronin A."/>
            <person name="Davis P."/>
            <person name="Feltwell T."/>
            <person name="Fraser A."/>
            <person name="Gentles S."/>
            <person name="Goble A."/>
            <person name="Hamlin N."/>
            <person name="Harris D.E."/>
            <person name="Hidalgo J."/>
            <person name="Hodgson G."/>
            <person name="Holroyd S."/>
            <person name="Hornsby T."/>
            <person name="Howarth S."/>
            <person name="Huckle E.J."/>
            <person name="Hunt S."/>
            <person name="Jagels K."/>
            <person name="James K.D."/>
            <person name="Jones L."/>
            <person name="Jones M."/>
            <person name="Leather S."/>
            <person name="McDonald S."/>
            <person name="McLean J."/>
            <person name="Mooney P."/>
            <person name="Moule S."/>
            <person name="Mungall K.L."/>
            <person name="Murphy L.D."/>
            <person name="Niblett D."/>
            <person name="Odell C."/>
            <person name="Oliver K."/>
            <person name="O'Neil S."/>
            <person name="Pearson D."/>
            <person name="Quail M.A."/>
            <person name="Rabbinowitsch E."/>
            <person name="Rutherford K.M."/>
            <person name="Rutter S."/>
            <person name="Saunders D."/>
            <person name="Seeger K."/>
            <person name="Sharp S."/>
            <person name="Skelton J."/>
            <person name="Simmonds M.N."/>
            <person name="Squares R."/>
            <person name="Squares S."/>
            <person name="Stevens K."/>
            <person name="Taylor K."/>
            <person name="Taylor R.G."/>
            <person name="Tivey A."/>
            <person name="Walsh S.V."/>
            <person name="Warren T."/>
            <person name="Whitehead S."/>
            <person name="Woodward J.R."/>
            <person name="Volckaert G."/>
            <person name="Aert R."/>
            <person name="Robben J."/>
            <person name="Grymonprez B."/>
            <person name="Weltjens I."/>
            <person name="Vanstreels E."/>
            <person name="Rieger M."/>
            <person name="Schaefer M."/>
            <person name="Mueller-Auer S."/>
            <person name="Gabel C."/>
            <person name="Fuchs M."/>
            <person name="Duesterhoeft A."/>
            <person name="Fritzc C."/>
            <person name="Holzer E."/>
            <person name="Moestl D."/>
            <person name="Hilbert H."/>
            <person name="Borzym K."/>
            <person name="Langer I."/>
            <person name="Beck A."/>
            <person name="Lehrach H."/>
            <person name="Reinhardt R."/>
            <person name="Pohl T.M."/>
            <person name="Eger P."/>
            <person name="Zimmermann W."/>
            <person name="Wedler H."/>
            <person name="Wambutt R."/>
            <person name="Purnelle B."/>
            <person name="Goffeau A."/>
            <person name="Cadieu E."/>
            <person name="Dreano S."/>
            <person name="Gloux S."/>
            <person name="Lelaure V."/>
            <person name="Mottier S."/>
            <person name="Galibert F."/>
            <person name="Aves S.J."/>
            <person name="Xiang Z."/>
            <person name="Hunt C."/>
            <person name="Moore K."/>
            <person name="Hurst S.M."/>
            <person name="Lucas M."/>
            <person name="Rochet M."/>
            <person name="Gaillardin C."/>
            <person name="Tallada V.A."/>
            <person name="Garzon A."/>
            <person name="Thode G."/>
            <person name="Daga R.R."/>
            <person name="Cruzado L."/>
            <person name="Jimenez J."/>
            <person name="Sanchez M."/>
            <person name="del Rey F."/>
            <person name="Benito J."/>
            <person name="Dominguez A."/>
            <person name="Revuelta J.L."/>
            <person name="Moreno S."/>
            <person name="Armstrong J."/>
            <person name="Forsburg S.L."/>
            <person name="Cerutti L."/>
            <person name="Lowe T."/>
            <person name="McCombie W.R."/>
            <person name="Paulsen I."/>
            <person name="Potashkin J."/>
            <person name="Shpakovski G.V."/>
            <person name="Ussery D."/>
            <person name="Barrell B.G."/>
            <person name="Nurse P."/>
        </authorList>
    </citation>
    <scope>NUCLEOTIDE SEQUENCE [LARGE SCALE GENOMIC DNA]</scope>
    <source>
        <strain>972 / ATCC 24843</strain>
    </source>
</reference>
<organism>
    <name type="scientific">Schizosaccharomyces pombe (strain 972 / ATCC 24843)</name>
    <name type="common">Fission yeast</name>
    <dbReference type="NCBI Taxonomy" id="284812"/>
    <lineage>
        <taxon>Eukaryota</taxon>
        <taxon>Fungi</taxon>
        <taxon>Dikarya</taxon>
        <taxon>Ascomycota</taxon>
        <taxon>Taphrinomycotina</taxon>
        <taxon>Schizosaccharomycetes</taxon>
        <taxon>Schizosaccharomycetales</taxon>
        <taxon>Schizosaccharomycetaceae</taxon>
        <taxon>Schizosaccharomyces</taxon>
    </lineage>
</organism>
<feature type="signal peptide" evidence="2">
    <location>
        <begin position="1"/>
        <end position="23"/>
    </location>
</feature>
<feature type="chain" id="PRO_0000314120" description="Carbohydrate-binding domain-containing protein C2E1P3.05c">
    <location>
        <begin position="24"/>
        <end position="197"/>
    </location>
</feature>
<feature type="domain" description="CBM1 1" evidence="3">
    <location>
        <begin position="25"/>
        <end position="61"/>
    </location>
</feature>
<feature type="domain" description="CBM1 2" evidence="3">
    <location>
        <begin position="68"/>
        <end position="104"/>
    </location>
</feature>
<feature type="region of interest" description="Disordered" evidence="4">
    <location>
        <begin position="115"/>
        <end position="163"/>
    </location>
</feature>
<feature type="glycosylation site" description="N-linked (GlcNAc...) asparagine" evidence="2">
    <location>
        <position position="182"/>
    </location>
</feature>
<feature type="glycosylation site" description="N-linked (GlcNAc...) asparagine" evidence="2">
    <location>
        <position position="193"/>
    </location>
</feature>
<feature type="disulfide bond" evidence="1">
    <location>
        <begin position="33"/>
        <end position="50"/>
    </location>
</feature>
<feature type="disulfide bond" evidence="1">
    <location>
        <begin position="44"/>
        <end position="60"/>
    </location>
</feature>
<feature type="disulfide bond" evidence="1">
    <location>
        <begin position="76"/>
        <end position="93"/>
    </location>
</feature>
<feature type="disulfide bond" evidence="1">
    <location>
        <begin position="87"/>
        <end position="103"/>
    </location>
</feature>
<dbReference type="EMBL" id="CU329670">
    <property type="protein sequence ID" value="CAB83009.1"/>
    <property type="molecule type" value="Genomic_DNA"/>
</dbReference>
<dbReference type="SMR" id="Q9P7F1"/>
<dbReference type="BioGRID" id="279110">
    <property type="interactions" value="37"/>
</dbReference>
<dbReference type="STRING" id="284812.Q9P7F1"/>
<dbReference type="CAZy" id="CBM1">
    <property type="family name" value="Carbohydrate-Binding Module Family 1"/>
</dbReference>
<dbReference type="PaxDb" id="4896-SPAC2E1P3.05c.1"/>
<dbReference type="EnsemblFungi" id="SPAC2E1P3.05c.1">
    <property type="protein sequence ID" value="SPAC2E1P3.05c.1:pep"/>
    <property type="gene ID" value="SPAC2E1P3.05c"/>
</dbReference>
<dbReference type="KEGG" id="spo:2542656"/>
<dbReference type="PomBase" id="SPAC2E1P3.05c"/>
<dbReference type="VEuPathDB" id="FungiDB:SPAC2E1P3.05c"/>
<dbReference type="eggNOG" id="ENOG502SFAG">
    <property type="taxonomic scope" value="Eukaryota"/>
</dbReference>
<dbReference type="HOGENOM" id="CLU_1384881_0_0_1"/>
<dbReference type="InParanoid" id="Q9P7F1"/>
<dbReference type="OMA" id="CCEPGSE"/>
<dbReference type="PRO" id="PR:Q9P7F1"/>
<dbReference type="Proteomes" id="UP000002485">
    <property type="component" value="Chromosome I"/>
</dbReference>
<dbReference type="GO" id="GO:0009986">
    <property type="term" value="C:cell surface"/>
    <property type="evidence" value="ECO:0000304"/>
    <property type="project" value="PomBase"/>
</dbReference>
<dbReference type="GO" id="GO:0005576">
    <property type="term" value="C:extracellular region"/>
    <property type="evidence" value="ECO:0007669"/>
    <property type="project" value="UniProtKB-SubCell"/>
</dbReference>
<dbReference type="GO" id="GO:0030248">
    <property type="term" value="F:cellulose binding"/>
    <property type="evidence" value="ECO:0007669"/>
    <property type="project" value="InterPro"/>
</dbReference>
<dbReference type="GO" id="GO:0005975">
    <property type="term" value="P:carbohydrate metabolic process"/>
    <property type="evidence" value="ECO:0007669"/>
    <property type="project" value="InterPro"/>
</dbReference>
<dbReference type="InterPro" id="IPR035971">
    <property type="entry name" value="CBD_sf"/>
</dbReference>
<dbReference type="InterPro" id="IPR000254">
    <property type="entry name" value="Cellulose-bd_dom_fun"/>
</dbReference>
<dbReference type="Pfam" id="PF00734">
    <property type="entry name" value="CBM_1"/>
    <property type="match status" value="2"/>
</dbReference>
<dbReference type="SMART" id="SM00236">
    <property type="entry name" value="fCBD"/>
    <property type="match status" value="2"/>
</dbReference>
<dbReference type="SUPFAM" id="SSF57180">
    <property type="entry name" value="Cellulose-binding domain"/>
    <property type="match status" value="2"/>
</dbReference>
<dbReference type="PROSITE" id="PS00562">
    <property type="entry name" value="CBM1_1"/>
    <property type="match status" value="2"/>
</dbReference>
<dbReference type="PROSITE" id="PS51164">
    <property type="entry name" value="CBM1_2"/>
    <property type="match status" value="2"/>
</dbReference>
<keyword id="KW-1015">Disulfide bond</keyword>
<keyword id="KW-0325">Glycoprotein</keyword>
<keyword id="KW-1185">Reference proteome</keyword>
<keyword id="KW-0677">Repeat</keyword>
<keyword id="KW-0964">Secreted</keyword>
<keyword id="KW-0732">Signal</keyword>
<gene>
    <name type="ORF">SPAC2E1P3.05c</name>
</gene>